<protein>
    <recommendedName>
        <fullName>Caeridin-1.4</fullName>
    </recommendedName>
</protein>
<sequence>GLLDGLLGGLGL</sequence>
<comment type="function">
    <text>Caeridins show neither neuropeptide activity nor antibiotic activity.</text>
</comment>
<comment type="subcellular location">
    <subcellularLocation>
        <location>Secreted</location>
    </subcellularLocation>
</comment>
<comment type="tissue specificity">
    <text>Expressed by the skin dorsal glands.</text>
</comment>
<keyword id="KW-0027">Amidation</keyword>
<keyword id="KW-0878">Amphibian defense peptide</keyword>
<keyword id="KW-0903">Direct protein sequencing</keyword>
<keyword id="KW-0964">Secreted</keyword>
<feature type="peptide" id="PRO_0000043759" description="Caeridin-1.4">
    <location>
        <begin position="1"/>
        <end position="12"/>
    </location>
</feature>
<feature type="modified residue" description="Leucine amide" evidence="1">
    <location>
        <position position="12"/>
    </location>
</feature>
<organism>
    <name type="scientific">Ranoidea chloris</name>
    <name type="common">Red-eyed tree frog</name>
    <name type="synonym">Litoria chloris</name>
    <dbReference type="NCBI Taxonomy" id="86064"/>
    <lineage>
        <taxon>Eukaryota</taxon>
        <taxon>Metazoa</taxon>
        <taxon>Chordata</taxon>
        <taxon>Craniata</taxon>
        <taxon>Vertebrata</taxon>
        <taxon>Euteleostomi</taxon>
        <taxon>Amphibia</taxon>
        <taxon>Batrachia</taxon>
        <taxon>Anura</taxon>
        <taxon>Neobatrachia</taxon>
        <taxon>Hyloidea</taxon>
        <taxon>Hylidae</taxon>
        <taxon>Pelodryadinae</taxon>
        <taxon>Ranoidea</taxon>
    </lineage>
</organism>
<dbReference type="GO" id="GO:0005576">
    <property type="term" value="C:extracellular region"/>
    <property type="evidence" value="ECO:0007669"/>
    <property type="project" value="UniProtKB-SubCell"/>
</dbReference>
<dbReference type="GO" id="GO:0006952">
    <property type="term" value="P:defense response"/>
    <property type="evidence" value="ECO:0007669"/>
    <property type="project" value="UniProtKB-KW"/>
</dbReference>
<proteinExistence type="evidence at protein level"/>
<accession>P62581</accession>
<accession>P56246</accession>
<name>CDN14_RANCH</name>
<reference key="1">
    <citation type="journal article" date="1998" name="J. Pept. Res.">
        <title>New antibiotic caerin 1 peptides from the skin secretion of the Australian tree frog Litoria chloris. Comparison of the activities of the caerin 1 peptides from the genus Litoria.</title>
        <authorList>
            <person name="Steinborner S.T."/>
            <person name="Currie G.J."/>
            <person name="Bowie J.H."/>
            <person name="Wallace J.C."/>
            <person name="Tyler M.J."/>
        </authorList>
    </citation>
    <scope>PROTEIN SEQUENCE</scope>
    <scope>AMIDATION AT LEU-12</scope>
    <source>
        <tissue>Skin secretion</tissue>
    </source>
</reference>
<evidence type="ECO:0000269" key="1">
    <source>
    </source>
</evidence>